<gene>
    <name evidence="1" type="primary">minE</name>
    <name type="ordered locus">TTE0904</name>
</gene>
<evidence type="ECO:0000255" key="1">
    <source>
        <dbReference type="HAMAP-Rule" id="MF_00262"/>
    </source>
</evidence>
<keyword id="KW-0131">Cell cycle</keyword>
<keyword id="KW-0132">Cell division</keyword>
<keyword id="KW-1185">Reference proteome</keyword>
<name>MINE_CALS4</name>
<proteinExistence type="inferred from homology"/>
<protein>
    <recommendedName>
        <fullName evidence="1">Cell division topological specificity factor</fullName>
    </recommendedName>
</protein>
<accession>Q8RBB8</accession>
<sequence>MDLFKAFGGKSNSKDIAKERLQLLLVHDRIDTSPRFLEMIKEDILNVISNYVDIDEKGLRVEITKERKSDDTFISALHANIPIKKMKQVIR</sequence>
<reference key="1">
    <citation type="journal article" date="2002" name="Genome Res.">
        <title>A complete sequence of the T. tengcongensis genome.</title>
        <authorList>
            <person name="Bao Q."/>
            <person name="Tian Y."/>
            <person name="Li W."/>
            <person name="Xu Z."/>
            <person name="Xuan Z."/>
            <person name="Hu S."/>
            <person name="Dong W."/>
            <person name="Yang J."/>
            <person name="Chen Y."/>
            <person name="Xue Y."/>
            <person name="Xu Y."/>
            <person name="Lai X."/>
            <person name="Huang L."/>
            <person name="Dong X."/>
            <person name="Ma Y."/>
            <person name="Ling L."/>
            <person name="Tan H."/>
            <person name="Chen R."/>
            <person name="Wang J."/>
            <person name="Yu J."/>
            <person name="Yang H."/>
        </authorList>
    </citation>
    <scope>NUCLEOTIDE SEQUENCE [LARGE SCALE GENOMIC DNA]</scope>
    <source>
        <strain>DSM 15242 / JCM 11007 / NBRC 100824 / MB4</strain>
    </source>
</reference>
<comment type="function">
    <text evidence="1">Prevents the cell division inhibition by proteins MinC and MinD at internal division sites while permitting inhibition at polar sites. This ensures cell division at the proper site by restricting the formation of a division septum at the midpoint of the long axis of the cell.</text>
</comment>
<comment type="similarity">
    <text evidence="1">Belongs to the MinE family.</text>
</comment>
<organism>
    <name type="scientific">Caldanaerobacter subterraneus subsp. tengcongensis (strain DSM 15242 / JCM 11007 / NBRC 100824 / MB4)</name>
    <name type="common">Thermoanaerobacter tengcongensis</name>
    <dbReference type="NCBI Taxonomy" id="273068"/>
    <lineage>
        <taxon>Bacteria</taxon>
        <taxon>Bacillati</taxon>
        <taxon>Bacillota</taxon>
        <taxon>Clostridia</taxon>
        <taxon>Thermoanaerobacterales</taxon>
        <taxon>Thermoanaerobacteraceae</taxon>
        <taxon>Caldanaerobacter</taxon>
    </lineage>
</organism>
<feature type="chain" id="PRO_0000298209" description="Cell division topological specificity factor">
    <location>
        <begin position="1"/>
        <end position="91"/>
    </location>
</feature>
<dbReference type="EMBL" id="AE008691">
    <property type="protein sequence ID" value="AAM24160.1"/>
    <property type="molecule type" value="Genomic_DNA"/>
</dbReference>
<dbReference type="RefSeq" id="WP_011025282.1">
    <property type="nucleotide sequence ID" value="NZ_JANUCV010000001.1"/>
</dbReference>
<dbReference type="SMR" id="Q8RBB8"/>
<dbReference type="STRING" id="273068.TTE0904"/>
<dbReference type="KEGG" id="tte:TTE0904"/>
<dbReference type="eggNOG" id="COG0851">
    <property type="taxonomic scope" value="Bacteria"/>
</dbReference>
<dbReference type="HOGENOM" id="CLU_137929_1_1_9"/>
<dbReference type="OrthoDB" id="9796578at2"/>
<dbReference type="Proteomes" id="UP000000555">
    <property type="component" value="Chromosome"/>
</dbReference>
<dbReference type="GO" id="GO:0051301">
    <property type="term" value="P:cell division"/>
    <property type="evidence" value="ECO:0007669"/>
    <property type="project" value="UniProtKB-KW"/>
</dbReference>
<dbReference type="GO" id="GO:0032955">
    <property type="term" value="P:regulation of division septum assembly"/>
    <property type="evidence" value="ECO:0007669"/>
    <property type="project" value="InterPro"/>
</dbReference>
<dbReference type="Gene3D" id="3.30.1070.10">
    <property type="entry name" value="Cell division topological specificity factor MinE"/>
    <property type="match status" value="1"/>
</dbReference>
<dbReference type="HAMAP" id="MF_00262">
    <property type="entry name" value="MinE"/>
    <property type="match status" value="1"/>
</dbReference>
<dbReference type="InterPro" id="IPR005527">
    <property type="entry name" value="MinE"/>
</dbReference>
<dbReference type="InterPro" id="IPR036707">
    <property type="entry name" value="MinE_sf"/>
</dbReference>
<dbReference type="NCBIfam" id="TIGR01215">
    <property type="entry name" value="minE"/>
    <property type="match status" value="1"/>
</dbReference>
<dbReference type="NCBIfam" id="NF001422">
    <property type="entry name" value="PRK00296.1"/>
    <property type="match status" value="1"/>
</dbReference>
<dbReference type="Pfam" id="PF03776">
    <property type="entry name" value="MinE"/>
    <property type="match status" value="1"/>
</dbReference>
<dbReference type="SUPFAM" id="SSF55229">
    <property type="entry name" value="Cell division protein MinE topological specificity domain"/>
    <property type="match status" value="1"/>
</dbReference>